<comment type="function">
    <text evidence="2">Has antibacterial activity against the Gram-negative bacteria Klebsiella sp., Proteus sp., E.coli ATCC 8739 (MIC=72 ug/ml) and K.pneumoniae (MIC=32 ug/ml). Has no activity against the Gram-negative bacterium S.typhimurium or the Gram-positive bacterium S.aureus. Does not have antifungal activity against the human and plant pathogenic fungi F.oxysporum, A.fumigatus and R.solani.</text>
</comment>
<comment type="subunit">
    <text evidence="2">Monomer and homodimer. Might act by homodimer formation.</text>
</comment>
<comment type="mass spectrometry" mass="6184.12" method="MALDI" evidence="2">
    <text>Monomer.</text>
</comment>
<comment type="mass spectrometry" mass="12368.25" method="MALDI" evidence="2">
    <text>Homodimer.</text>
</comment>
<accession>P86030</accession>
<feature type="peptide" id="PRO_0000352772" description="Glycine-rich antimicrobial peptide Pg-AMP" evidence="2">
    <location>
        <begin position="1"/>
        <end position="55"/>
    </location>
</feature>
<feature type="region of interest" description="Disordered" evidence="1">
    <location>
        <begin position="18"/>
        <end position="55"/>
    </location>
</feature>
<feature type="compositionally biased region" description="Gly residues" evidence="1">
    <location>
        <begin position="18"/>
        <end position="39"/>
    </location>
</feature>
<feature type="compositionally biased region" description="Basic and acidic residues" evidence="1">
    <location>
        <begin position="44"/>
        <end position="55"/>
    </location>
</feature>
<organism>
    <name type="scientific">Psidium guajava</name>
    <name type="common">Guava</name>
    <name type="synonym">Psidium pyriferum</name>
    <dbReference type="NCBI Taxonomy" id="120290"/>
    <lineage>
        <taxon>Eukaryota</taxon>
        <taxon>Viridiplantae</taxon>
        <taxon>Streptophyta</taxon>
        <taxon>Embryophyta</taxon>
        <taxon>Tracheophyta</taxon>
        <taxon>Spermatophyta</taxon>
        <taxon>Magnoliopsida</taxon>
        <taxon>eudicotyledons</taxon>
        <taxon>Gunneridae</taxon>
        <taxon>Pentapetalae</taxon>
        <taxon>rosids</taxon>
        <taxon>malvids</taxon>
        <taxon>Myrtales</taxon>
        <taxon>Myrtaceae</taxon>
        <taxon>Myrtoideae</taxon>
        <taxon>Myrteae</taxon>
        <taxon>Pimenta group</taxon>
        <taxon>Psidium</taxon>
    </lineage>
</organism>
<reference evidence="4" key="1">
    <citation type="journal article" date="2008" name="Peptides">
        <title>Identification of a novel storage glycine-rich peptide from guava (Psidium guajava) seeds with activity against Gram-negative bacteria.</title>
        <authorList>
            <person name="Pelegrini P.B."/>
            <person name="Murad A.M."/>
            <person name="Silva L.P."/>
            <person name="dos Santos R.C.P."/>
            <person name="Costa F.T."/>
            <person name="Tagliari P.D."/>
            <person name="Bloch C. Jr."/>
            <person name="Noronha E.F."/>
            <person name="Miller R.N.G."/>
            <person name="Franco O.L."/>
        </authorList>
    </citation>
    <scope>PROTEIN SEQUENCE</scope>
    <scope>FUNCTION</scope>
    <scope>SUBUNIT</scope>
    <scope>MASS SPECTROMETRY</scope>
    <source>
        <tissue evidence="2">Seed</tissue>
    </source>
</reference>
<name>GRP1_PSIGU</name>
<proteinExistence type="evidence at protein level"/>
<keyword id="KW-0044">Antibiotic</keyword>
<keyword id="KW-0929">Antimicrobial</keyword>
<keyword id="KW-0903">Direct protein sequencing</keyword>
<dbReference type="GO" id="GO:0042742">
    <property type="term" value="P:defense response to bacterium"/>
    <property type="evidence" value="ECO:0007669"/>
    <property type="project" value="UniProtKB-KW"/>
</dbReference>
<protein>
    <recommendedName>
        <fullName evidence="3">Glycine-rich antimicrobial peptide Pg-AMP</fullName>
    </recommendedName>
</protein>
<evidence type="ECO:0000256" key="1">
    <source>
        <dbReference type="SAM" id="MobiDB-lite"/>
    </source>
</evidence>
<evidence type="ECO:0000269" key="2">
    <source>
    </source>
</evidence>
<evidence type="ECO:0000303" key="3">
    <source>
    </source>
</evidence>
<evidence type="ECO:0000305" key="4"/>
<sequence length="55" mass="6029">RESPSSRMECYEQAERYGYGGYGGGRYGGGYGSGRGQPVGQGVERSHDDNRNQPR</sequence>